<proteinExistence type="evidence at transcript level"/>
<gene>
    <name type="primary">OSB3</name>
    <name type="ordered locus">At5g44785</name>
    <name type="ORF">K23L20.13</name>
    <name type="ORF">T19K24.10</name>
</gene>
<dbReference type="EMBL" id="AC002342">
    <property type="protein sequence ID" value="AAC79142.1"/>
    <property type="status" value="ALT_SEQ"/>
    <property type="molecule type" value="Genomic_DNA"/>
</dbReference>
<dbReference type="EMBL" id="CP002688">
    <property type="protein sequence ID" value="AED95162.1"/>
    <property type="molecule type" value="Genomic_DNA"/>
</dbReference>
<dbReference type="EMBL" id="AK118806">
    <property type="protein sequence ID" value="BAC43396.1"/>
    <property type="molecule type" value="mRNA"/>
</dbReference>
<dbReference type="EMBL" id="AY084919">
    <property type="protein sequence ID" value="AAM61481.1"/>
    <property type="molecule type" value="mRNA"/>
</dbReference>
<dbReference type="EMBL" id="BT005411">
    <property type="protein sequence ID" value="AAO63831.1"/>
    <property type="molecule type" value="mRNA"/>
</dbReference>
<dbReference type="EMBL" id="BT006477">
    <property type="protein sequence ID" value="AAP21285.1"/>
    <property type="molecule type" value="mRNA"/>
</dbReference>
<dbReference type="EMBL" id="AK227530">
    <property type="protein sequence ID" value="BAE99530.1"/>
    <property type="molecule type" value="mRNA"/>
</dbReference>
<dbReference type="RefSeq" id="NP_568639.1">
    <molecule id="Q8GWJ4-1"/>
    <property type="nucleotide sequence ID" value="NM_123846.4"/>
</dbReference>
<dbReference type="SMR" id="Q8GWJ4"/>
<dbReference type="FunCoup" id="Q8GWJ4">
    <property type="interactions" value="823"/>
</dbReference>
<dbReference type="STRING" id="3702.Q8GWJ4"/>
<dbReference type="PaxDb" id="3702-AT5G44785.2"/>
<dbReference type="ProteomicsDB" id="248669">
    <molecule id="Q8GWJ4-1"/>
</dbReference>
<dbReference type="EnsemblPlants" id="AT5G44785.1">
    <molecule id="Q8GWJ4-1"/>
    <property type="protein sequence ID" value="AT5G44785.1"/>
    <property type="gene ID" value="AT5G44785"/>
</dbReference>
<dbReference type="GeneID" id="834508"/>
<dbReference type="Gramene" id="AT5G44785.1">
    <molecule id="Q8GWJ4-1"/>
    <property type="protein sequence ID" value="AT5G44785.1"/>
    <property type="gene ID" value="AT5G44785"/>
</dbReference>
<dbReference type="KEGG" id="ath:AT5G44785"/>
<dbReference type="Araport" id="AT5G44785"/>
<dbReference type="TAIR" id="AT5G44785">
    <property type="gene designation" value="OSB3"/>
</dbReference>
<dbReference type="eggNOG" id="ENOG502S0Q4">
    <property type="taxonomic scope" value="Eukaryota"/>
</dbReference>
<dbReference type="InParanoid" id="Q8GWJ4"/>
<dbReference type="OMA" id="PNVTYPQ"/>
<dbReference type="PhylomeDB" id="Q8GWJ4"/>
<dbReference type="CD-CODE" id="4299E36E">
    <property type="entry name" value="Nucleolus"/>
</dbReference>
<dbReference type="PRO" id="PR:Q8GWJ4"/>
<dbReference type="Proteomes" id="UP000006548">
    <property type="component" value="Chromosome 5"/>
</dbReference>
<dbReference type="ExpressionAtlas" id="Q8GWJ4">
    <property type="expression patterns" value="baseline and differential"/>
</dbReference>
<dbReference type="GO" id="GO:0009507">
    <property type="term" value="C:chloroplast"/>
    <property type="evidence" value="ECO:0007669"/>
    <property type="project" value="UniProtKB-SubCell"/>
</dbReference>
<dbReference type="GO" id="GO:0005739">
    <property type="term" value="C:mitochondrion"/>
    <property type="evidence" value="ECO:0007669"/>
    <property type="project" value="UniProtKB-SubCell"/>
</dbReference>
<dbReference type="GO" id="GO:0003697">
    <property type="term" value="F:single-stranded DNA binding"/>
    <property type="evidence" value="ECO:0007669"/>
    <property type="project" value="InterPro"/>
</dbReference>
<dbReference type="GO" id="GO:0006260">
    <property type="term" value="P:DNA replication"/>
    <property type="evidence" value="ECO:0007669"/>
    <property type="project" value="InterPro"/>
</dbReference>
<dbReference type="Gene3D" id="2.40.50.140">
    <property type="entry name" value="Nucleic acid-binding proteins"/>
    <property type="match status" value="1"/>
</dbReference>
<dbReference type="InterPro" id="IPR012340">
    <property type="entry name" value="NA-bd_OB-fold"/>
</dbReference>
<dbReference type="InterPro" id="IPR000424">
    <property type="entry name" value="Primosome_PriB/ssb"/>
</dbReference>
<dbReference type="InterPro" id="IPR011344">
    <property type="entry name" value="ssDNA-bd"/>
</dbReference>
<dbReference type="PANTHER" id="PTHR10302:SF12">
    <property type="entry name" value="PROTEIN OSB3, CHLOROPLASTIC_MITOCHONDRIAL"/>
    <property type="match status" value="1"/>
</dbReference>
<dbReference type="PANTHER" id="PTHR10302">
    <property type="entry name" value="SINGLE-STRANDED DNA-BINDING PROTEIN"/>
    <property type="match status" value="1"/>
</dbReference>
<dbReference type="SUPFAM" id="SSF50249">
    <property type="entry name" value="Nucleic acid-binding proteins"/>
    <property type="match status" value="1"/>
</dbReference>
<dbReference type="PROSITE" id="PS50935">
    <property type="entry name" value="SSB"/>
    <property type="match status" value="1"/>
</dbReference>
<feature type="transit peptide" description="Chloroplast and mitochondrion" evidence="2">
    <location>
        <begin position="1"/>
        <end position="61"/>
    </location>
</feature>
<feature type="chain" id="PRO_0000383610" description="Protein OSB3, chloroplastic/mitochondrial">
    <location>
        <begin position="62"/>
        <end position="440"/>
    </location>
</feature>
<feature type="domain" description="SSB" evidence="3">
    <location>
        <begin position="80"/>
        <end position="178"/>
    </location>
</feature>
<feature type="region of interest" description="PDF region 1">
    <location>
        <begin position="218"/>
        <end position="270"/>
    </location>
</feature>
<feature type="region of interest" description="PDF region 2">
    <location>
        <begin position="294"/>
        <end position="342"/>
    </location>
</feature>
<feature type="region of interest" description="PDF region 3">
    <location>
        <begin position="380"/>
        <end position="428"/>
    </location>
</feature>
<feature type="sequence conflict" description="In Ref. 4; AAM61481." evidence="6" ref="4">
    <original>K</original>
    <variation>T</variation>
    <location>
        <position position="73"/>
    </location>
</feature>
<feature type="sequence conflict" description="In Ref. 4; AAM61481." evidence="6" ref="4">
    <original>F</original>
    <variation>L</variation>
    <location>
        <position position="352"/>
    </location>
</feature>
<organism>
    <name type="scientific">Arabidopsis thaliana</name>
    <name type="common">Mouse-ear cress</name>
    <dbReference type="NCBI Taxonomy" id="3702"/>
    <lineage>
        <taxon>Eukaryota</taxon>
        <taxon>Viridiplantae</taxon>
        <taxon>Streptophyta</taxon>
        <taxon>Embryophyta</taxon>
        <taxon>Tracheophyta</taxon>
        <taxon>Spermatophyta</taxon>
        <taxon>Magnoliopsida</taxon>
        <taxon>eudicotyledons</taxon>
        <taxon>Gunneridae</taxon>
        <taxon>Pentapetalae</taxon>
        <taxon>rosids</taxon>
        <taxon>malvids</taxon>
        <taxon>Brassicales</taxon>
        <taxon>Brassicaceae</taxon>
        <taxon>Camelineae</taxon>
        <taxon>Arabidopsis</taxon>
    </lineage>
</organism>
<name>OSB3_ARATH</name>
<evidence type="ECO:0000250" key="1"/>
<evidence type="ECO:0000255" key="2"/>
<evidence type="ECO:0000255" key="3">
    <source>
        <dbReference type="PROSITE-ProRule" id="PRU00252"/>
    </source>
</evidence>
<evidence type="ECO:0000269" key="4">
    <source>
    </source>
</evidence>
<evidence type="ECO:0000269" key="5">
    <source>
    </source>
</evidence>
<evidence type="ECO:0000305" key="6"/>
<keyword id="KW-0025">Alternative splicing</keyword>
<keyword id="KW-0150">Chloroplast</keyword>
<keyword id="KW-0238">DNA-binding</keyword>
<keyword id="KW-0496">Mitochondrion</keyword>
<keyword id="KW-0934">Plastid</keyword>
<keyword id="KW-1185">Reference proteome</keyword>
<keyword id="KW-0677">Repeat</keyword>
<keyword id="KW-0809">Transit peptide</keyword>
<accession>Q8GWJ4</accession>
<accession>O48581</accession>
<accession>Q8LFC9</accession>
<protein>
    <recommendedName>
        <fullName>Protein OSB3, chloroplastic/mitochondrial</fullName>
    </recommendedName>
    <alternativeName>
        <fullName>Organellar single-stranded DNA-binding protein 3</fullName>
    </alternativeName>
</protein>
<reference key="1">
    <citation type="journal article" date="2000" name="Nature">
        <title>Sequence and analysis of chromosome 5 of the plant Arabidopsis thaliana.</title>
        <authorList>
            <person name="Tabata S."/>
            <person name="Kaneko T."/>
            <person name="Nakamura Y."/>
            <person name="Kotani H."/>
            <person name="Kato T."/>
            <person name="Asamizu E."/>
            <person name="Miyajima N."/>
            <person name="Sasamoto S."/>
            <person name="Kimura T."/>
            <person name="Hosouchi T."/>
            <person name="Kawashima K."/>
            <person name="Kohara M."/>
            <person name="Matsumoto M."/>
            <person name="Matsuno A."/>
            <person name="Muraki A."/>
            <person name="Nakayama S."/>
            <person name="Nakazaki N."/>
            <person name="Naruo K."/>
            <person name="Okumura S."/>
            <person name="Shinpo S."/>
            <person name="Takeuchi C."/>
            <person name="Wada T."/>
            <person name="Watanabe A."/>
            <person name="Yamada M."/>
            <person name="Yasuda M."/>
            <person name="Sato S."/>
            <person name="de la Bastide M."/>
            <person name="Huang E."/>
            <person name="Spiegel L."/>
            <person name="Gnoj L."/>
            <person name="O'Shaughnessy A."/>
            <person name="Preston R."/>
            <person name="Habermann K."/>
            <person name="Murray J."/>
            <person name="Johnson D."/>
            <person name="Rohlfing T."/>
            <person name="Nelson J."/>
            <person name="Stoneking T."/>
            <person name="Pepin K."/>
            <person name="Spieth J."/>
            <person name="Sekhon M."/>
            <person name="Armstrong J."/>
            <person name="Becker M."/>
            <person name="Belter E."/>
            <person name="Cordum H."/>
            <person name="Cordes M."/>
            <person name="Courtney L."/>
            <person name="Courtney W."/>
            <person name="Dante M."/>
            <person name="Du H."/>
            <person name="Edwards J."/>
            <person name="Fryman J."/>
            <person name="Haakensen B."/>
            <person name="Lamar E."/>
            <person name="Latreille P."/>
            <person name="Leonard S."/>
            <person name="Meyer R."/>
            <person name="Mulvaney E."/>
            <person name="Ozersky P."/>
            <person name="Riley A."/>
            <person name="Strowmatt C."/>
            <person name="Wagner-McPherson C."/>
            <person name="Wollam A."/>
            <person name="Yoakum M."/>
            <person name="Bell M."/>
            <person name="Dedhia N."/>
            <person name="Parnell L."/>
            <person name="Shah R."/>
            <person name="Rodriguez M."/>
            <person name="Hoon See L."/>
            <person name="Vil D."/>
            <person name="Baker J."/>
            <person name="Kirchoff K."/>
            <person name="Toth K."/>
            <person name="King L."/>
            <person name="Bahret A."/>
            <person name="Miller B."/>
            <person name="Marra M.A."/>
            <person name="Martienssen R."/>
            <person name="McCombie W.R."/>
            <person name="Wilson R.K."/>
            <person name="Murphy G."/>
            <person name="Bancroft I."/>
            <person name="Volckaert G."/>
            <person name="Wambutt R."/>
            <person name="Duesterhoeft A."/>
            <person name="Stiekema W."/>
            <person name="Pohl T."/>
            <person name="Entian K.-D."/>
            <person name="Terryn N."/>
            <person name="Hartley N."/>
            <person name="Bent E."/>
            <person name="Johnson S."/>
            <person name="Langham S.-A."/>
            <person name="McCullagh B."/>
            <person name="Robben J."/>
            <person name="Grymonprez B."/>
            <person name="Zimmermann W."/>
            <person name="Ramsperger U."/>
            <person name="Wedler H."/>
            <person name="Balke K."/>
            <person name="Wedler E."/>
            <person name="Peters S."/>
            <person name="van Staveren M."/>
            <person name="Dirkse W."/>
            <person name="Mooijman P."/>
            <person name="Klein Lankhorst R."/>
            <person name="Weitzenegger T."/>
            <person name="Bothe G."/>
            <person name="Rose M."/>
            <person name="Hauf J."/>
            <person name="Berneiser S."/>
            <person name="Hempel S."/>
            <person name="Feldpausch M."/>
            <person name="Lamberth S."/>
            <person name="Villarroel R."/>
            <person name="Gielen J."/>
            <person name="Ardiles W."/>
            <person name="Bents O."/>
            <person name="Lemcke K."/>
            <person name="Kolesov G."/>
            <person name="Mayer K.F.X."/>
            <person name="Rudd S."/>
            <person name="Schoof H."/>
            <person name="Schueller C."/>
            <person name="Zaccaria P."/>
            <person name="Mewes H.-W."/>
            <person name="Bevan M."/>
            <person name="Fransz P.F."/>
        </authorList>
    </citation>
    <scope>NUCLEOTIDE SEQUENCE [LARGE SCALE GENOMIC DNA]</scope>
    <source>
        <strain>cv. Columbia</strain>
    </source>
</reference>
<reference key="2">
    <citation type="journal article" date="2017" name="Plant J.">
        <title>Araport11: a complete reannotation of the Arabidopsis thaliana reference genome.</title>
        <authorList>
            <person name="Cheng C.Y."/>
            <person name="Krishnakumar V."/>
            <person name="Chan A.P."/>
            <person name="Thibaud-Nissen F."/>
            <person name="Schobel S."/>
            <person name="Town C.D."/>
        </authorList>
    </citation>
    <scope>GENOME REANNOTATION</scope>
    <source>
        <strain>cv. Columbia</strain>
    </source>
</reference>
<reference key="3">
    <citation type="journal article" date="2002" name="Science">
        <title>Functional annotation of a full-length Arabidopsis cDNA collection.</title>
        <authorList>
            <person name="Seki M."/>
            <person name="Narusaka M."/>
            <person name="Kamiya A."/>
            <person name="Ishida J."/>
            <person name="Satou M."/>
            <person name="Sakurai T."/>
            <person name="Nakajima M."/>
            <person name="Enju A."/>
            <person name="Akiyama K."/>
            <person name="Oono Y."/>
            <person name="Muramatsu M."/>
            <person name="Hayashizaki Y."/>
            <person name="Kawai J."/>
            <person name="Carninci P."/>
            <person name="Itoh M."/>
            <person name="Ishii Y."/>
            <person name="Arakawa T."/>
            <person name="Shibata K."/>
            <person name="Shinagawa A."/>
            <person name="Shinozaki K."/>
        </authorList>
    </citation>
    <scope>NUCLEOTIDE SEQUENCE [LARGE SCALE MRNA]</scope>
    <source>
        <strain>cv. Columbia</strain>
    </source>
</reference>
<reference key="4">
    <citation type="submission" date="2002-03" db="EMBL/GenBank/DDBJ databases">
        <title>Full-length cDNA from Arabidopsis thaliana.</title>
        <authorList>
            <person name="Brover V.V."/>
            <person name="Troukhan M.E."/>
            <person name="Alexandrov N.A."/>
            <person name="Lu Y.-P."/>
            <person name="Flavell R.B."/>
            <person name="Feldmann K.A."/>
        </authorList>
    </citation>
    <scope>NUCLEOTIDE SEQUENCE [LARGE SCALE MRNA]</scope>
</reference>
<reference key="5">
    <citation type="journal article" date="2003" name="Science">
        <title>Empirical analysis of transcriptional activity in the Arabidopsis genome.</title>
        <authorList>
            <person name="Yamada K."/>
            <person name="Lim J."/>
            <person name="Dale J.M."/>
            <person name="Chen H."/>
            <person name="Shinn P."/>
            <person name="Palm C.J."/>
            <person name="Southwick A.M."/>
            <person name="Wu H.C."/>
            <person name="Kim C.J."/>
            <person name="Nguyen M."/>
            <person name="Pham P.K."/>
            <person name="Cheuk R.F."/>
            <person name="Karlin-Newmann G."/>
            <person name="Liu S.X."/>
            <person name="Lam B."/>
            <person name="Sakano H."/>
            <person name="Wu T."/>
            <person name="Yu G."/>
            <person name="Miranda M."/>
            <person name="Quach H.L."/>
            <person name="Tripp M."/>
            <person name="Chang C.H."/>
            <person name="Lee J.M."/>
            <person name="Toriumi M.J."/>
            <person name="Chan M.M."/>
            <person name="Tang C.C."/>
            <person name="Onodera C.S."/>
            <person name="Deng J.M."/>
            <person name="Akiyama K."/>
            <person name="Ansari Y."/>
            <person name="Arakawa T."/>
            <person name="Banh J."/>
            <person name="Banno F."/>
            <person name="Bowser L."/>
            <person name="Brooks S.Y."/>
            <person name="Carninci P."/>
            <person name="Chao Q."/>
            <person name="Choy N."/>
            <person name="Enju A."/>
            <person name="Goldsmith A.D."/>
            <person name="Gurjal M."/>
            <person name="Hansen N.F."/>
            <person name="Hayashizaki Y."/>
            <person name="Johnson-Hopson C."/>
            <person name="Hsuan V.W."/>
            <person name="Iida K."/>
            <person name="Karnes M."/>
            <person name="Khan S."/>
            <person name="Koesema E."/>
            <person name="Ishida J."/>
            <person name="Jiang P.X."/>
            <person name="Jones T."/>
            <person name="Kawai J."/>
            <person name="Kamiya A."/>
            <person name="Meyers C."/>
            <person name="Nakajima M."/>
            <person name="Narusaka M."/>
            <person name="Seki M."/>
            <person name="Sakurai T."/>
            <person name="Satou M."/>
            <person name="Tamse R."/>
            <person name="Vaysberg M."/>
            <person name="Wallender E.K."/>
            <person name="Wong C."/>
            <person name="Yamamura Y."/>
            <person name="Yuan S."/>
            <person name="Shinozaki K."/>
            <person name="Davis R.W."/>
            <person name="Theologis A."/>
            <person name="Ecker J.R."/>
        </authorList>
    </citation>
    <scope>NUCLEOTIDE SEQUENCE [LARGE SCALE MRNA]</scope>
    <source>
        <strain>cv. Columbia</strain>
    </source>
</reference>
<reference key="6">
    <citation type="submission" date="2006-07" db="EMBL/GenBank/DDBJ databases">
        <title>Large-scale analysis of RIKEN Arabidopsis full-length (RAFL) cDNAs.</title>
        <authorList>
            <person name="Totoki Y."/>
            <person name="Seki M."/>
            <person name="Ishida J."/>
            <person name="Nakajima M."/>
            <person name="Enju A."/>
            <person name="Kamiya A."/>
            <person name="Narusaka M."/>
            <person name="Shin-i T."/>
            <person name="Nakagawa M."/>
            <person name="Sakamoto N."/>
            <person name="Oishi K."/>
            <person name="Kohara Y."/>
            <person name="Kobayashi M."/>
            <person name="Toyoda A."/>
            <person name="Sakaki Y."/>
            <person name="Sakurai T."/>
            <person name="Iida K."/>
            <person name="Akiyama K."/>
            <person name="Satou M."/>
            <person name="Toyoda T."/>
            <person name="Konagaya A."/>
            <person name="Carninci P."/>
            <person name="Kawai J."/>
            <person name="Hayashizaki Y."/>
            <person name="Shinozaki K."/>
        </authorList>
    </citation>
    <scope>NUCLEOTIDE SEQUENCE [LARGE SCALE MRNA]</scope>
    <source>
        <strain>cv. Columbia</strain>
    </source>
</reference>
<reference key="7">
    <citation type="journal article" date="2006" name="J. Exp. Bot.">
        <title>Ethylene-dependent and -independent pathways controlling floral abscission are revealed to converge using promoter::reporter gene constructs in the ida abscission mutant.</title>
        <authorList>
            <person name="Butenko M.A."/>
            <person name="Stenvik G.-E."/>
            <person name="Alm V."/>
            <person name="Saether B."/>
            <person name="Patterson S.E."/>
            <person name="Aalen R.B."/>
        </authorList>
    </citation>
    <scope>TISSUE SPECIFICITY</scope>
</reference>
<reference key="8">
    <citation type="journal article" date="2006" name="Plant Cell">
        <title>The plant-specific ssDNA binding protein OSB1 is involved in the stoichiometric transmission of mitochondrial DNA in Arabidopsis.</title>
        <authorList>
            <person name="Zaegel V."/>
            <person name="Guermann B."/>
            <person name="Le Ret M."/>
            <person name="Andres C."/>
            <person name="Meyer D."/>
            <person name="Erhardt M."/>
            <person name="Canaday J."/>
            <person name="Gualberto J.M."/>
            <person name="Imbault P."/>
        </authorList>
    </citation>
    <scope>SUBCELLULAR LOCATION</scope>
    <scope>TISSUE SPECIFICITY</scope>
    <scope>DISRUPTION PHENOTYPE</scope>
</reference>
<comment type="function">
    <text evidence="1">Binds single-stranded DNA.</text>
</comment>
<comment type="subcellular location">
    <subcellularLocation>
        <location evidence="5">Mitochondrion</location>
    </subcellularLocation>
    <subcellularLocation>
        <location evidence="5">Plastid</location>
        <location evidence="5">Chloroplast</location>
    </subcellularLocation>
</comment>
<comment type="alternative products">
    <event type="alternative splicing"/>
    <isoform>
        <id>Q8GWJ4-1</id>
        <name>1</name>
        <sequence type="displayed"/>
    </isoform>
    <text>A number of isoforms are produced. According to EST sequences.</text>
</comment>
<comment type="tissue specificity">
    <text evidence="4 5">Expressed primarily in the female gametophyte and in the floral abscission zone.</text>
</comment>
<comment type="disruption phenotype">
    <text evidence="5">No visible phenotype.</text>
</comment>
<comment type="sequence caution" evidence="6">
    <conflict type="erroneous gene model prediction">
        <sequence resource="EMBL-CDS" id="AAC79142"/>
    </conflict>
</comment>
<sequence>MNLISRTLTRAVSSSLYHSKAAKLPTQKWIISQQIRVFSATVISGGGKKPLAKVSVKPPLNVATEKESTPPKKIEYKPEISNWINLIGFVEQPVQFGPCSDGKFWAGTVISQRSGSKSSNFWIPIIFEGDLAKIAVQHVKKEDRIHVSGKLFIDSPPPNVTYSQSNVQVMVQNLNFVQAATSTTKTISPPEKEVTSIKKKPARSKKVKVIDEETSNSWKHLIENPKEWLDHRGNKANGLVKPGHPDFKMKVGGLSLWLSTAPDWALLKLEELKFDVLVPKGNIKLNQLKGEESWKDLVQNPDKWLDNRSDKTNVKYPDFKHKETGEALWMTNSPIWVLSKLPPLKKNQERPFMSNKVSQLELDVEVPKGNLKQLKREEIWKNLVENPSKWWDNRLDKRNPKGPDFKHKETGEALWIGDSPTWALSKLPPLKKNQERPVMA</sequence>